<dbReference type="EC" id="2.7.7.27" evidence="1"/>
<dbReference type="EMBL" id="CP001074">
    <property type="protein sequence ID" value="ACE92800.1"/>
    <property type="molecule type" value="Genomic_DNA"/>
</dbReference>
<dbReference type="SMR" id="B3Q000"/>
<dbReference type="KEGG" id="rec:RHECIAT_CH0003863"/>
<dbReference type="eggNOG" id="COG0448">
    <property type="taxonomic scope" value="Bacteria"/>
</dbReference>
<dbReference type="HOGENOM" id="CLU_029499_14_1_5"/>
<dbReference type="UniPathway" id="UPA00164"/>
<dbReference type="Proteomes" id="UP000008817">
    <property type="component" value="Chromosome"/>
</dbReference>
<dbReference type="GO" id="GO:0005524">
    <property type="term" value="F:ATP binding"/>
    <property type="evidence" value="ECO:0007669"/>
    <property type="project" value="UniProtKB-KW"/>
</dbReference>
<dbReference type="GO" id="GO:0008878">
    <property type="term" value="F:glucose-1-phosphate adenylyltransferase activity"/>
    <property type="evidence" value="ECO:0007669"/>
    <property type="project" value="UniProtKB-UniRule"/>
</dbReference>
<dbReference type="GO" id="GO:0005978">
    <property type="term" value="P:glycogen biosynthetic process"/>
    <property type="evidence" value="ECO:0007669"/>
    <property type="project" value="UniProtKB-UniRule"/>
</dbReference>
<dbReference type="CDD" id="cd02508">
    <property type="entry name" value="ADP_Glucose_PP"/>
    <property type="match status" value="1"/>
</dbReference>
<dbReference type="CDD" id="cd04651">
    <property type="entry name" value="LbH_G1P_AT_C"/>
    <property type="match status" value="1"/>
</dbReference>
<dbReference type="Gene3D" id="2.160.10.10">
    <property type="entry name" value="Hexapeptide repeat proteins"/>
    <property type="match status" value="1"/>
</dbReference>
<dbReference type="Gene3D" id="3.90.550.10">
    <property type="entry name" value="Spore Coat Polysaccharide Biosynthesis Protein SpsA, Chain A"/>
    <property type="match status" value="1"/>
</dbReference>
<dbReference type="HAMAP" id="MF_00624">
    <property type="entry name" value="GlgC"/>
    <property type="match status" value="1"/>
</dbReference>
<dbReference type="InterPro" id="IPR011831">
    <property type="entry name" value="ADP-Glc_PPase"/>
</dbReference>
<dbReference type="InterPro" id="IPR005836">
    <property type="entry name" value="ADP_Glu_pyroP_CS"/>
</dbReference>
<dbReference type="InterPro" id="IPR023049">
    <property type="entry name" value="GlgC_bac"/>
</dbReference>
<dbReference type="InterPro" id="IPR056818">
    <property type="entry name" value="GlmU/GlgC-like_hexapep"/>
</dbReference>
<dbReference type="InterPro" id="IPR005835">
    <property type="entry name" value="NTP_transferase_dom"/>
</dbReference>
<dbReference type="InterPro" id="IPR029044">
    <property type="entry name" value="Nucleotide-diphossugar_trans"/>
</dbReference>
<dbReference type="InterPro" id="IPR011004">
    <property type="entry name" value="Trimer_LpxA-like_sf"/>
</dbReference>
<dbReference type="NCBIfam" id="TIGR02091">
    <property type="entry name" value="glgC"/>
    <property type="match status" value="1"/>
</dbReference>
<dbReference type="NCBIfam" id="NF001947">
    <property type="entry name" value="PRK00725.1"/>
    <property type="match status" value="1"/>
</dbReference>
<dbReference type="NCBIfam" id="NF002023">
    <property type="entry name" value="PRK00844.1"/>
    <property type="match status" value="1"/>
</dbReference>
<dbReference type="PANTHER" id="PTHR43523:SF2">
    <property type="entry name" value="GLUCOSE-1-PHOSPHATE ADENYLYLTRANSFERASE"/>
    <property type="match status" value="1"/>
</dbReference>
<dbReference type="PANTHER" id="PTHR43523">
    <property type="entry name" value="GLUCOSE-1-PHOSPHATE ADENYLYLTRANSFERASE-RELATED"/>
    <property type="match status" value="1"/>
</dbReference>
<dbReference type="Pfam" id="PF24894">
    <property type="entry name" value="Hexapep_GlmU"/>
    <property type="match status" value="1"/>
</dbReference>
<dbReference type="Pfam" id="PF00483">
    <property type="entry name" value="NTP_transferase"/>
    <property type="match status" value="1"/>
</dbReference>
<dbReference type="SUPFAM" id="SSF53448">
    <property type="entry name" value="Nucleotide-diphospho-sugar transferases"/>
    <property type="match status" value="1"/>
</dbReference>
<dbReference type="SUPFAM" id="SSF51161">
    <property type="entry name" value="Trimeric LpxA-like enzymes"/>
    <property type="match status" value="1"/>
</dbReference>
<dbReference type="PROSITE" id="PS00808">
    <property type="entry name" value="ADP_GLC_PYROPHOSPH_1"/>
    <property type="match status" value="1"/>
</dbReference>
<dbReference type="PROSITE" id="PS00809">
    <property type="entry name" value="ADP_GLC_PYROPHOSPH_2"/>
    <property type="match status" value="1"/>
</dbReference>
<dbReference type="PROSITE" id="PS00810">
    <property type="entry name" value="ADP_GLC_PYROPHOSPH_3"/>
    <property type="match status" value="1"/>
</dbReference>
<keyword id="KW-0067">ATP-binding</keyword>
<keyword id="KW-0119">Carbohydrate metabolism</keyword>
<keyword id="KW-0320">Glycogen biosynthesis</keyword>
<keyword id="KW-0321">Glycogen metabolism</keyword>
<keyword id="KW-0547">Nucleotide-binding</keyword>
<keyword id="KW-0548">Nucleotidyltransferase</keyword>
<keyword id="KW-0808">Transferase</keyword>
<reference key="1">
    <citation type="journal article" date="2010" name="Appl. Environ. Microbiol.">
        <title>Conserved symbiotic plasmid DNA sequences in the multireplicon pangenomic structure of Rhizobium etli.</title>
        <authorList>
            <person name="Gonzalez V."/>
            <person name="Acosta J.L."/>
            <person name="Santamaria R.I."/>
            <person name="Bustos P."/>
            <person name="Fernandez J.L."/>
            <person name="Hernandez Gonzalez I.L."/>
            <person name="Diaz R."/>
            <person name="Flores M."/>
            <person name="Palacios R."/>
            <person name="Mora J."/>
            <person name="Davila G."/>
        </authorList>
    </citation>
    <scope>NUCLEOTIDE SEQUENCE [LARGE SCALE GENOMIC DNA]</scope>
    <source>
        <strain>CIAT 652</strain>
    </source>
</reference>
<sequence>MVEKRIQPLARDAMAYVLAGGRGSRLKELTDRRAKPAVYFGGKARIIDFALSNALNSGIRRIGVATQYKAHSLIRHMQRGWNFFRPERNESFDILPASQRVSETQWYEGTADAVYQNIDIIEDYGVEYMVILAGDHVYKMDYEWMLQQHVDSGADVTIGCLEVPRMEATGFGVMHVNDKDEILAFVEKPADPPGIPDKPDFALASMGIYVFHTKFLLDALRRDAADPNSSRDFGKDIIPYIVQNGKAVAHRFAKSCVRSDFEHEPYWRDVGTIDAYWQANIDLTAIVPELDIYDKSWPIWTYAEITPPAKFVHDDEDRRGSATSSVVSGDCIISGASLNKSLLFTGVRANSFSKLEGAVILPNVKIGRRAQLKNVVIDHGVVIPEGLVVGEDPELDAKRFRRTESGICLITQPMIDKLDI</sequence>
<protein>
    <recommendedName>
        <fullName evidence="1">Glucose-1-phosphate adenylyltransferase</fullName>
        <ecNumber evidence="1">2.7.7.27</ecNumber>
    </recommendedName>
    <alternativeName>
        <fullName evidence="1">ADP-glucose pyrophosphorylase</fullName>
        <shortName evidence="1">ADPGlc PPase</shortName>
    </alternativeName>
    <alternativeName>
        <fullName evidence="1">ADP-glucose synthase</fullName>
    </alternativeName>
</protein>
<comment type="function">
    <text evidence="1">Involved in the biosynthesis of ADP-glucose, a building block required for the elongation reactions to produce glycogen. Catalyzes the reaction between ATP and alpha-D-glucose 1-phosphate (G1P) to produce pyrophosphate and ADP-Glc.</text>
</comment>
<comment type="catalytic activity">
    <reaction evidence="1">
        <text>alpha-D-glucose 1-phosphate + ATP + H(+) = ADP-alpha-D-glucose + diphosphate</text>
        <dbReference type="Rhea" id="RHEA:12120"/>
        <dbReference type="ChEBI" id="CHEBI:15378"/>
        <dbReference type="ChEBI" id="CHEBI:30616"/>
        <dbReference type="ChEBI" id="CHEBI:33019"/>
        <dbReference type="ChEBI" id="CHEBI:57498"/>
        <dbReference type="ChEBI" id="CHEBI:58601"/>
        <dbReference type="EC" id="2.7.7.27"/>
    </reaction>
</comment>
<comment type="pathway">
    <text evidence="1">Glycan biosynthesis; glycogen biosynthesis.</text>
</comment>
<comment type="subunit">
    <text evidence="1">Homotetramer.</text>
</comment>
<comment type="similarity">
    <text evidence="1">Belongs to the bacterial/plant glucose-1-phosphate adenylyltransferase family.</text>
</comment>
<evidence type="ECO:0000255" key="1">
    <source>
        <dbReference type="HAMAP-Rule" id="MF_00624"/>
    </source>
</evidence>
<proteinExistence type="inferred from homology"/>
<organism>
    <name type="scientific">Rhizobium etli (strain CIAT 652)</name>
    <dbReference type="NCBI Taxonomy" id="491916"/>
    <lineage>
        <taxon>Bacteria</taxon>
        <taxon>Pseudomonadati</taxon>
        <taxon>Pseudomonadota</taxon>
        <taxon>Alphaproteobacteria</taxon>
        <taxon>Hyphomicrobiales</taxon>
        <taxon>Rhizobiaceae</taxon>
        <taxon>Rhizobium/Agrobacterium group</taxon>
        <taxon>Rhizobium</taxon>
    </lineage>
</organism>
<name>GLGC_RHIE6</name>
<accession>B3Q000</accession>
<feature type="chain" id="PRO_1000130494" description="Glucose-1-phosphate adenylyltransferase">
    <location>
        <begin position="1"/>
        <end position="420"/>
    </location>
</feature>
<feature type="binding site" evidence="1">
    <location>
        <position position="107"/>
    </location>
    <ligand>
        <name>alpha-D-glucose 1-phosphate</name>
        <dbReference type="ChEBI" id="CHEBI:58601"/>
    </ligand>
</feature>
<feature type="binding site" evidence="1">
    <location>
        <position position="172"/>
    </location>
    <ligand>
        <name>alpha-D-glucose 1-phosphate</name>
        <dbReference type="ChEBI" id="CHEBI:58601"/>
    </ligand>
</feature>
<feature type="binding site" evidence="1">
    <location>
        <begin position="187"/>
        <end position="188"/>
    </location>
    <ligand>
        <name>alpha-D-glucose 1-phosphate</name>
        <dbReference type="ChEBI" id="CHEBI:58601"/>
    </ligand>
</feature>
<feature type="binding site" evidence="1">
    <location>
        <position position="205"/>
    </location>
    <ligand>
        <name>alpha-D-glucose 1-phosphate</name>
        <dbReference type="ChEBI" id="CHEBI:58601"/>
    </ligand>
</feature>
<gene>
    <name evidence="1" type="primary">glgC</name>
    <name type="ordered locus">RHECIAT_CH0003863</name>
</gene>